<keyword id="KW-0975">Bacterial flagellum</keyword>
<evidence type="ECO:0000255" key="1">
    <source>
        <dbReference type="HAMAP-Rule" id="MF_00724"/>
    </source>
</evidence>
<sequence>MSQGVEFNRLMLEMRSMQMEAMAKAKPVQAPAEAGAPSFSEMLSQAVGKVNETQQASTAMANAFEVGQSGVDLTDVMIASQKASVSFQAMTQVRNKLVQAYQDIMQMPV</sequence>
<gene>
    <name evidence="1" type="primary">fliE</name>
    <name type="ordered locus">PSPA7_4271</name>
</gene>
<proteinExistence type="inferred from homology"/>
<organism>
    <name type="scientific">Pseudomonas paraeruginosa (strain DSM 24068 / PA7)</name>
    <name type="common">Pseudomonas aeruginosa (strain PA7)</name>
    <dbReference type="NCBI Taxonomy" id="381754"/>
    <lineage>
        <taxon>Bacteria</taxon>
        <taxon>Pseudomonadati</taxon>
        <taxon>Pseudomonadota</taxon>
        <taxon>Gammaproteobacteria</taxon>
        <taxon>Pseudomonadales</taxon>
        <taxon>Pseudomonadaceae</taxon>
        <taxon>Pseudomonas</taxon>
        <taxon>Pseudomonas paraeruginosa</taxon>
    </lineage>
</organism>
<protein>
    <recommendedName>
        <fullName evidence="1">Flagellar hook-basal body complex protein FliE</fullName>
    </recommendedName>
</protein>
<feature type="chain" id="PRO_1000045864" description="Flagellar hook-basal body complex protein FliE">
    <location>
        <begin position="1"/>
        <end position="109"/>
    </location>
</feature>
<accession>A6V990</accession>
<name>FLIE_PSEP7</name>
<reference key="1">
    <citation type="submission" date="2007-06" db="EMBL/GenBank/DDBJ databases">
        <authorList>
            <person name="Dodson R.J."/>
            <person name="Harkins D."/>
            <person name="Paulsen I.T."/>
        </authorList>
    </citation>
    <scope>NUCLEOTIDE SEQUENCE [LARGE SCALE GENOMIC DNA]</scope>
    <source>
        <strain>DSM 24068 / PA7</strain>
    </source>
</reference>
<comment type="subcellular location">
    <subcellularLocation>
        <location evidence="1">Bacterial flagellum basal body</location>
    </subcellularLocation>
</comment>
<comment type="similarity">
    <text evidence="1">Belongs to the FliE family.</text>
</comment>
<dbReference type="EMBL" id="CP000744">
    <property type="protein sequence ID" value="ABR81540.1"/>
    <property type="molecule type" value="Genomic_DNA"/>
</dbReference>
<dbReference type="RefSeq" id="WP_003158014.1">
    <property type="nucleotide sequence ID" value="NC_009656.1"/>
</dbReference>
<dbReference type="SMR" id="A6V990"/>
<dbReference type="GeneID" id="77222297"/>
<dbReference type="KEGG" id="pap:PSPA7_4271"/>
<dbReference type="HOGENOM" id="CLU_147249_0_0_6"/>
<dbReference type="Proteomes" id="UP000001582">
    <property type="component" value="Chromosome"/>
</dbReference>
<dbReference type="GO" id="GO:0009425">
    <property type="term" value="C:bacterial-type flagellum basal body"/>
    <property type="evidence" value="ECO:0007669"/>
    <property type="project" value="UniProtKB-SubCell"/>
</dbReference>
<dbReference type="GO" id="GO:0003774">
    <property type="term" value="F:cytoskeletal motor activity"/>
    <property type="evidence" value="ECO:0007669"/>
    <property type="project" value="InterPro"/>
</dbReference>
<dbReference type="GO" id="GO:0005198">
    <property type="term" value="F:structural molecule activity"/>
    <property type="evidence" value="ECO:0007669"/>
    <property type="project" value="InterPro"/>
</dbReference>
<dbReference type="GO" id="GO:0071973">
    <property type="term" value="P:bacterial-type flagellum-dependent cell motility"/>
    <property type="evidence" value="ECO:0007669"/>
    <property type="project" value="InterPro"/>
</dbReference>
<dbReference type="HAMAP" id="MF_00724">
    <property type="entry name" value="FliE"/>
    <property type="match status" value="1"/>
</dbReference>
<dbReference type="InterPro" id="IPR001624">
    <property type="entry name" value="FliE"/>
</dbReference>
<dbReference type="NCBIfam" id="TIGR00205">
    <property type="entry name" value="fliE"/>
    <property type="match status" value="1"/>
</dbReference>
<dbReference type="PANTHER" id="PTHR34653">
    <property type="match status" value="1"/>
</dbReference>
<dbReference type="PANTHER" id="PTHR34653:SF1">
    <property type="entry name" value="FLAGELLAR HOOK-BASAL BODY COMPLEX PROTEIN FLIE"/>
    <property type="match status" value="1"/>
</dbReference>
<dbReference type="Pfam" id="PF02049">
    <property type="entry name" value="FliE"/>
    <property type="match status" value="1"/>
</dbReference>
<dbReference type="PRINTS" id="PR01006">
    <property type="entry name" value="FLGHOOKFLIE"/>
</dbReference>